<accession>P65028</accession>
<accession>A0A1R3Y1N1</accession>
<accession>Q50626</accession>
<accession>X2BLB8</accession>
<feature type="chain" id="PRO_0000104064" description="Uncharacterized protein Mb2626">
    <location>
        <begin position="1"/>
        <end position="81"/>
    </location>
</feature>
<feature type="domain" description="SpoVT-AbrB" evidence="1">
    <location>
        <begin position="1"/>
        <end position="45"/>
    </location>
</feature>
<evidence type="ECO:0000255" key="1">
    <source>
        <dbReference type="PROSITE-ProRule" id="PRU01076"/>
    </source>
</evidence>
<evidence type="ECO:0000305" key="2"/>
<sequence>MRTTIDVAGRLVIPKRIRERLGLRGNDQVEITERDGRIEIEPAPTGVELVREGSVLVARPERPLPPLTDEIVRETLDRTRR</sequence>
<organism>
    <name type="scientific">Mycobacterium bovis (strain ATCC BAA-935 / AF2122/97)</name>
    <dbReference type="NCBI Taxonomy" id="233413"/>
    <lineage>
        <taxon>Bacteria</taxon>
        <taxon>Bacillati</taxon>
        <taxon>Actinomycetota</taxon>
        <taxon>Actinomycetes</taxon>
        <taxon>Mycobacteriales</taxon>
        <taxon>Mycobacteriaceae</taxon>
        <taxon>Mycobacterium</taxon>
        <taxon>Mycobacterium tuberculosis complex</taxon>
    </lineage>
</organism>
<protein>
    <recommendedName>
        <fullName>Uncharacterized protein Mb2626</fullName>
    </recommendedName>
</protein>
<name>Y2626_MYCBO</name>
<proteinExistence type="predicted"/>
<comment type="similarity">
    <text evidence="2">To B.subtilis SpoVT.</text>
</comment>
<keyword id="KW-0238">DNA-binding</keyword>
<keyword id="KW-1185">Reference proteome</keyword>
<dbReference type="EMBL" id="LT708304">
    <property type="protein sequence ID" value="SIU01244.1"/>
    <property type="molecule type" value="Genomic_DNA"/>
</dbReference>
<dbReference type="RefSeq" id="NP_856272.1">
    <property type="nucleotide sequence ID" value="NC_002945.3"/>
</dbReference>
<dbReference type="RefSeq" id="WP_003413429.1">
    <property type="nucleotide sequence ID" value="NC_002945.4"/>
</dbReference>
<dbReference type="SMR" id="P65028"/>
<dbReference type="KEGG" id="mbo:BQ2027_MB2626"/>
<dbReference type="PATRIC" id="fig|233413.5.peg.2887"/>
<dbReference type="Proteomes" id="UP000001419">
    <property type="component" value="Chromosome"/>
</dbReference>
<dbReference type="GO" id="GO:0003677">
    <property type="term" value="F:DNA binding"/>
    <property type="evidence" value="ECO:0007669"/>
    <property type="project" value="UniProtKB-KW"/>
</dbReference>
<dbReference type="Gene3D" id="2.10.260.10">
    <property type="match status" value="1"/>
</dbReference>
<dbReference type="InterPro" id="IPR007159">
    <property type="entry name" value="SpoVT-AbrB_dom"/>
</dbReference>
<dbReference type="InterPro" id="IPR037914">
    <property type="entry name" value="SpoVT-AbrB_sf"/>
</dbReference>
<dbReference type="NCBIfam" id="TIGR01439">
    <property type="entry name" value="lp_hng_hel_AbrB"/>
    <property type="match status" value="1"/>
</dbReference>
<dbReference type="Pfam" id="PF04014">
    <property type="entry name" value="MazE_antitoxin"/>
    <property type="match status" value="1"/>
</dbReference>
<dbReference type="SMART" id="SM00966">
    <property type="entry name" value="SpoVT_AbrB"/>
    <property type="match status" value="1"/>
</dbReference>
<dbReference type="SUPFAM" id="SSF89447">
    <property type="entry name" value="AbrB/MazE/MraZ-like"/>
    <property type="match status" value="1"/>
</dbReference>
<dbReference type="PROSITE" id="PS51740">
    <property type="entry name" value="SPOVT_ABRB"/>
    <property type="match status" value="1"/>
</dbReference>
<reference key="1">
    <citation type="journal article" date="2003" name="Proc. Natl. Acad. Sci. U.S.A.">
        <title>The complete genome sequence of Mycobacterium bovis.</title>
        <authorList>
            <person name="Garnier T."/>
            <person name="Eiglmeier K."/>
            <person name="Camus J.-C."/>
            <person name="Medina N."/>
            <person name="Mansoor H."/>
            <person name="Pryor M."/>
            <person name="Duthoy S."/>
            <person name="Grondin S."/>
            <person name="Lacroix C."/>
            <person name="Monsempe C."/>
            <person name="Simon S."/>
            <person name="Harris B."/>
            <person name="Atkin R."/>
            <person name="Doggett J."/>
            <person name="Mayes R."/>
            <person name="Keating L."/>
            <person name="Wheeler P.R."/>
            <person name="Parkhill J."/>
            <person name="Barrell B.G."/>
            <person name="Cole S.T."/>
            <person name="Gordon S.V."/>
            <person name="Hewinson R.G."/>
        </authorList>
    </citation>
    <scope>NUCLEOTIDE SEQUENCE [LARGE SCALE GENOMIC DNA]</scope>
    <source>
        <strain>ATCC BAA-935 / AF2122/97</strain>
    </source>
</reference>
<reference key="2">
    <citation type="journal article" date="2017" name="Genome Announc.">
        <title>Updated reference genome sequence and annotation of Mycobacterium bovis AF2122/97.</title>
        <authorList>
            <person name="Malone K.M."/>
            <person name="Farrell D."/>
            <person name="Stuber T.P."/>
            <person name="Schubert O.T."/>
            <person name="Aebersold R."/>
            <person name="Robbe-Austerman S."/>
            <person name="Gordon S.V."/>
        </authorList>
    </citation>
    <scope>NUCLEOTIDE SEQUENCE [LARGE SCALE GENOMIC DNA]</scope>
    <scope>GENOME REANNOTATION</scope>
    <source>
        <strain>ATCC BAA-935 / AF2122/97</strain>
    </source>
</reference>
<gene>
    <name type="ordered locus">BQ2027_MB2626</name>
</gene>